<comment type="function">
    <text evidence="1 3">Catalyzes alpha(1-&gt;3) linkage of fucosyl moiety transferred from GDP-beta-L-fucose to N-acetyl glucosamine (GlcNAc) within type 2 lactosamine (LacNAc, beta-D-Gal-(1-&gt;4)-beta-D-GlcNAc-) glycan attached to glycolipids and N- or O-linked glycoproteins. Fucosylates distal type 2 LacNAc and its fucosylated (H-type 2 LacNAc) and sialylated (sialyl-type 2 LacNAc) derivatives to form Lewis x (Lex) (CD15) and Lewis y (Ley) antigenic epitopes involved in cell adhesion and differentiation (By similarity). Generates Lex epitopes in the brain, presumably playing a role in the maintenance of neuronal stemness and neurite outgrowth in progenitor neural cells (By similarity). Fucosylates the internal type 2 LacNAc unit of the polylactosamine chain to form VIM-2 antigen that serves as recognition epitope for SELE (By similarity). Can also modify milk oligosaccharides in particular type 2 tetrasaccharide LNnT (By similarity).</text>
</comment>
<comment type="catalytic activity">
    <reaction evidence="3">
        <text>a beta-D-galactosyl-(1-&gt;4)-N-acetyl-beta-D-glucosaminyl derivative + GDP-beta-L-fucose = a beta-D-galactosyl-(1-&gt;4)-[alpha-L-fucosyl-(1-&gt;3)]-N-acetyl-beta-D-glucosaminyl derivative + GDP + H(+)</text>
        <dbReference type="Rhea" id="RHEA:14257"/>
        <dbReference type="ChEBI" id="CHEBI:15378"/>
        <dbReference type="ChEBI" id="CHEBI:57273"/>
        <dbReference type="ChEBI" id="CHEBI:58189"/>
        <dbReference type="ChEBI" id="CHEBI:133507"/>
        <dbReference type="ChEBI" id="CHEBI:137941"/>
        <dbReference type="EC" id="2.4.1.152"/>
    </reaction>
    <physiologicalReaction direction="left-to-right" evidence="3">
        <dbReference type="Rhea" id="RHEA:14258"/>
    </physiologicalReaction>
</comment>
<comment type="catalytic activity">
    <reaction evidence="3">
        <text>an alpha-Neu5Ac-(2-&gt;3)-beta-D-Gal-(1-&gt;4)-beta-D-GlcNAc-(1-&gt;3)-beta-D-Gal-(1-&gt;4)-beta-D-GlcNAc derivative + GDP-beta-L-fucose = an alpha-Neu5Ac-(2-&gt;3)-beta-D-Gal-(1-&gt;4)-beta-D-GlcNAc-(1-&gt;3)-beta-D-Gal-(1-&gt;4)-[alpha-L-Fuc-(1-&gt;3)]-beta-D-GlcNAc derivative + GDP + H(+)</text>
        <dbReference type="Rhea" id="RHEA:68044"/>
        <dbReference type="ChEBI" id="CHEBI:15378"/>
        <dbReference type="ChEBI" id="CHEBI:57273"/>
        <dbReference type="ChEBI" id="CHEBI:58189"/>
        <dbReference type="ChEBI" id="CHEBI:145343"/>
        <dbReference type="ChEBI" id="CHEBI:176900"/>
    </reaction>
    <physiologicalReaction direction="left-to-right" evidence="3">
        <dbReference type="Rhea" id="RHEA:68045"/>
    </physiologicalReaction>
</comment>
<comment type="catalytic activity">
    <reaction evidence="1">
        <text>alpha-N-glycoloylneuraminosyl-(2-&gt;3)-beta-D-galactosyl-(1-&gt;4)-N-acetyl-beta-D-glucosaminyl-(1-&gt;3)-beta-D-galactosyl-(1-&gt;4)-N-acetyl-beta-D-glucosaminyl-(1-&gt;3)-beta-D-galactosyl-(1-&gt;4)-beta-D-glucosyl-(1&lt;-&gt;1')-ceramide + GDP-beta-L-fucose = alpha-N-glycoloylneuraminosyl-(2-&gt;3)-beta-D-galactosyl-(1-&gt;4)-N-acetyl-beta-D-glucosaminyl-(1-&gt;3)-beta-D-galactosyl-(1-&gt;4)-[alpha-L-fucosyl-(1-&gt;3)]-N-acetyl-beta-D-glucosaminyl-(1-&gt;3)-beta-D-galactosyl-(1-&gt;4)-beta-D-glucosyl-(1&lt;-&gt;1')-ceramide + GDP + H(+)</text>
        <dbReference type="Rhea" id="RHEA:48388"/>
        <dbReference type="ChEBI" id="CHEBI:15378"/>
        <dbReference type="ChEBI" id="CHEBI:57273"/>
        <dbReference type="ChEBI" id="CHEBI:58189"/>
        <dbReference type="ChEBI" id="CHEBI:90383"/>
        <dbReference type="ChEBI" id="CHEBI:90384"/>
    </reaction>
    <physiologicalReaction direction="left-to-right" evidence="1">
        <dbReference type="Rhea" id="RHEA:48389"/>
    </physiologicalReaction>
</comment>
<comment type="catalytic activity">
    <reaction evidence="1">
        <text>alpha-D-galactosyl-(1-&gt;3)-beta-D-galactosyl-(1-&gt;4)-N-acetyl-beta-D-glucosaminyl-(1-&gt;3)-beta-D-galactosyl-(1-&gt;4)-beta-D-glucosyl-(1&lt;-&gt;1')-ceramide + GDP-beta-L-fucose = a neolactoside IV(3)-alpha-Gal,III(3)-alpha-Fuc-nLc4Cer + GDP + H(+)</text>
        <dbReference type="Rhea" id="RHEA:48380"/>
        <dbReference type="ChEBI" id="CHEBI:15378"/>
        <dbReference type="ChEBI" id="CHEBI:57273"/>
        <dbReference type="ChEBI" id="CHEBI:58189"/>
        <dbReference type="ChEBI" id="CHEBI:90380"/>
        <dbReference type="ChEBI" id="CHEBI:90381"/>
    </reaction>
    <physiologicalReaction direction="left-to-right" evidence="1">
        <dbReference type="Rhea" id="RHEA:48381"/>
    </physiologicalReaction>
</comment>
<comment type="catalytic activity">
    <reaction evidence="1">
        <text>a neolactoside nLc4Cer + GDP-beta-L-fucose = a neolactoside III(3)-alpha-Fuc-nLc4Cer + GDP + H(+)</text>
        <dbReference type="Rhea" id="RHEA:48376"/>
        <dbReference type="ChEBI" id="CHEBI:15378"/>
        <dbReference type="ChEBI" id="CHEBI:57273"/>
        <dbReference type="ChEBI" id="CHEBI:58189"/>
        <dbReference type="ChEBI" id="CHEBI:90376"/>
        <dbReference type="ChEBI" id="CHEBI:90379"/>
    </reaction>
    <physiologicalReaction direction="left-to-right" evidence="1">
        <dbReference type="Rhea" id="RHEA:48377"/>
    </physiologicalReaction>
</comment>
<comment type="catalytic activity">
    <reaction evidence="3">
        <text>an N-acetyl-alpha-neuraminyl-(2-&gt;3)-beta-D-galactosyl-(1-&gt;4)-N-acetyl-beta-D-glucosaminyl derivative + GDP-beta-L-fucose = an alpha-Neu5Ac-(2-&gt;3)-beta-D-Gal-(1-&gt;4)-[alpha-L-Fuc-(1-&gt;3)]-beta-D-GlcNAc derivative + GDP + H(+)</text>
        <dbReference type="Rhea" id="RHEA:56076"/>
        <dbReference type="ChEBI" id="CHEBI:15378"/>
        <dbReference type="ChEBI" id="CHEBI:57273"/>
        <dbReference type="ChEBI" id="CHEBI:58189"/>
        <dbReference type="ChEBI" id="CHEBI:136545"/>
        <dbReference type="ChEBI" id="CHEBI:139509"/>
    </reaction>
    <physiologicalReaction direction="left-to-right" evidence="3">
        <dbReference type="Rhea" id="RHEA:56077"/>
    </physiologicalReaction>
</comment>
<comment type="catalytic activity">
    <reaction evidence="3">
        <text>beta-D-Gal-(1-&gt;4)-beta-D-GlcNAc-(1-&gt;3)-beta-D-Gal-(1-&gt;4)-D-Glc + GDP-beta-L-fucose = beta-D-Gal-(1-&gt;4)-[alpha-L-Fuc-(1-&gt;3)]-beta-D-GlcNAc-(1-&gt;3)-beta-D-Gal-(1-&gt;4)-D-Glc + GDP + H(+)</text>
        <dbReference type="Rhea" id="RHEA:77187"/>
        <dbReference type="ChEBI" id="CHEBI:15378"/>
        <dbReference type="ChEBI" id="CHEBI:57273"/>
        <dbReference type="ChEBI" id="CHEBI:58189"/>
        <dbReference type="ChEBI" id="CHEBI:60239"/>
        <dbReference type="ChEBI" id="CHEBI:61352"/>
    </reaction>
    <physiologicalReaction direction="left-to-right" evidence="3">
        <dbReference type="Rhea" id="RHEA:77188"/>
    </physiologicalReaction>
</comment>
<comment type="catalytic activity">
    <reaction evidence="3">
        <text>an alpha-L-Fuc-(1-&gt;2)-beta-D-Gal-(1-&gt;4)-beta-D-GlcNAc derivative + GDP-beta-L-fucose = an alpha-L-Fuc-(1-&gt;2)-beta-D-Gal-(1-&gt;4)-[alpha-L-Fuc-(1-&gt;3)]-beta-D-GlcNAc derivative + GDP + H(+)</text>
        <dbReference type="Rhea" id="RHEA:77191"/>
        <dbReference type="ChEBI" id="CHEBI:15378"/>
        <dbReference type="ChEBI" id="CHEBI:57273"/>
        <dbReference type="ChEBI" id="CHEBI:58189"/>
        <dbReference type="ChEBI" id="CHEBI:133510"/>
        <dbReference type="ChEBI" id="CHEBI:195560"/>
    </reaction>
    <physiologicalReaction direction="left-to-right" evidence="3">
        <dbReference type="Rhea" id="RHEA:77192"/>
    </physiologicalReaction>
</comment>
<comment type="activity regulation">
    <text evidence="3">Activated by Mn2+.</text>
</comment>
<comment type="pathway">
    <text evidence="1 3">Protein modification; protein glycosylation.</text>
</comment>
<comment type="pathway">
    <text evidence="1">Glycolipid biosynthesis.</text>
</comment>
<comment type="subunit">
    <text evidence="3">Homodimer.</text>
</comment>
<comment type="subcellular location">
    <subcellularLocation>
        <location evidence="3">Golgi apparatus</location>
        <location evidence="3">trans-Golgi network membrane</location>
        <topology evidence="2">Single-pass type II membrane protein</topology>
    </subcellularLocation>
    <subcellularLocation>
        <location evidence="1">Golgi apparatus membrane</location>
    </subcellularLocation>
</comment>
<comment type="domain">
    <text evidence="3">The donor-binding domain adopts a Rossman-like fold involved in GDP-beta-L-fucose sugar donor interactions.</text>
</comment>
<comment type="domain">
    <text evidence="3">The acceptor-binding domain adopts a Rossman-like fold consisting of six-stranded parallel beta sheets characteristic of the Toll/interleukin-1 receptor (TIR) fold family. Interacts with the LacNAc unit of type 2 LacNAc and H-type 2 LacNAc structures. It contains the catalytic base Glu-137 which deprotonates the hydroxyl group of GlcNAc while forming bridging interactions with the donor sugar to position the catalytic machinery in the active site.</text>
</comment>
<comment type="PTM">
    <text evidence="3">N-glycosylated with complex-type N-glycans.</text>
</comment>
<comment type="similarity">
    <text evidence="6">Belongs to the glycosyltransferase 10 family.</text>
</comment>
<reference key="1">
    <citation type="submission" date="2004-09" db="EMBL/GenBank/DDBJ databases">
        <title>Phylogeny of fucosyltransferases.</title>
        <authorList>
            <person name="Martinez-Duncker I."/>
            <person name="Oriol R."/>
            <person name="Mollicone R."/>
        </authorList>
    </citation>
    <scope>NUCLEOTIDE SEQUENCE [MRNA]</scope>
</reference>
<gene>
    <name evidence="3" type="primary">FUT9</name>
</gene>
<name>FUT9_CANLF</name>
<feature type="chain" id="PRO_0000221116" description="4-galactosyl-N-acetylglucosaminide 3-alpha-L-fucosyltransferase 9">
    <location>
        <begin position="1"/>
        <end position="359"/>
    </location>
</feature>
<feature type="topological domain" description="Cytoplasmic" evidence="4">
    <location>
        <begin position="1"/>
        <end position="11"/>
    </location>
</feature>
<feature type="transmembrane region" description="Helical; Signal-anchor for type II membrane protein" evidence="4">
    <location>
        <begin position="12"/>
        <end position="32"/>
    </location>
</feature>
<feature type="topological domain" description="Lumenal" evidence="4">
    <location>
        <begin position="33"/>
        <end position="359"/>
    </location>
</feature>
<feature type="region of interest" description="Acceptor-binding" evidence="3">
    <location>
        <begin position="63"/>
        <end position="168"/>
    </location>
</feature>
<feature type="region of interest" description="Donor-binding" evidence="3">
    <location>
        <begin position="169"/>
        <end position="326"/>
    </location>
</feature>
<feature type="region of interest" description="Acceptor-binding" evidence="3">
    <location>
        <begin position="327"/>
        <end position="359"/>
    </location>
</feature>
<feature type="active site" description="Nucleophile" evidence="3">
    <location>
        <position position="137"/>
    </location>
</feature>
<feature type="binding site" evidence="3">
    <location>
        <position position="75"/>
    </location>
    <ligand>
        <name>a beta-D-galactosyl-(1-&gt;4)-N-acetyl-beta-D-glucosaminyl derivative</name>
        <dbReference type="ChEBI" id="CHEBI:133507"/>
    </ligand>
</feature>
<feature type="binding site" evidence="3">
    <location>
        <position position="137"/>
    </location>
    <ligand>
        <name>a beta-D-galactosyl-(1-&gt;4)-N-acetyl-beta-D-glucosaminyl derivative</name>
        <dbReference type="ChEBI" id="CHEBI:133507"/>
    </ligand>
</feature>
<feature type="binding site" evidence="3">
    <location>
        <position position="137"/>
    </location>
    <ligand>
        <name>GDP-beta-L-fucose</name>
        <dbReference type="ChEBI" id="CHEBI:57273"/>
    </ligand>
</feature>
<feature type="binding site" evidence="3">
    <location>
        <position position="168"/>
    </location>
    <ligand>
        <name>GDP-beta-L-fucose</name>
        <dbReference type="ChEBI" id="CHEBI:57273"/>
    </ligand>
</feature>
<feature type="binding site" evidence="3">
    <location>
        <position position="192"/>
    </location>
    <ligand>
        <name>GDP-beta-L-fucose</name>
        <dbReference type="ChEBI" id="CHEBI:57273"/>
    </ligand>
</feature>
<feature type="binding site" evidence="3">
    <location>
        <position position="194"/>
    </location>
    <ligand>
        <name>GDP-beta-L-fucose</name>
        <dbReference type="ChEBI" id="CHEBI:57273"/>
    </ligand>
</feature>
<feature type="binding site" evidence="3">
    <location>
        <position position="195"/>
    </location>
    <ligand>
        <name>GDP-beta-L-fucose</name>
        <dbReference type="ChEBI" id="CHEBI:57273"/>
    </ligand>
</feature>
<feature type="binding site" evidence="3">
    <location>
        <position position="202"/>
    </location>
    <ligand>
        <name>GDP-beta-L-fucose</name>
        <dbReference type="ChEBI" id="CHEBI:57273"/>
    </ligand>
</feature>
<feature type="binding site" evidence="3">
    <location>
        <position position="226"/>
    </location>
    <ligand>
        <name>GDP-beta-L-fucose</name>
        <dbReference type="ChEBI" id="CHEBI:57273"/>
    </ligand>
</feature>
<feature type="binding site" evidence="3">
    <location>
        <position position="241"/>
    </location>
    <ligand>
        <name>GDP-beta-L-fucose</name>
        <dbReference type="ChEBI" id="CHEBI:57273"/>
    </ligand>
</feature>
<feature type="binding site" evidence="3">
    <location>
        <position position="246"/>
    </location>
    <ligand>
        <name>GDP-beta-L-fucose</name>
        <dbReference type="ChEBI" id="CHEBI:57273"/>
    </ligand>
</feature>
<feature type="binding site" evidence="3">
    <location>
        <position position="252"/>
    </location>
    <ligand>
        <name>GDP-beta-L-fucose</name>
        <dbReference type="ChEBI" id="CHEBI:57273"/>
    </ligand>
</feature>
<feature type="binding site" evidence="3">
    <location>
        <position position="255"/>
    </location>
    <ligand>
        <name>GDP-beta-L-fucose</name>
        <dbReference type="ChEBI" id="CHEBI:57273"/>
    </ligand>
</feature>
<feature type="binding site" evidence="3">
    <location>
        <position position="256"/>
    </location>
    <ligand>
        <name>GDP-beta-L-fucose</name>
        <dbReference type="ChEBI" id="CHEBI:57273"/>
    </ligand>
</feature>
<feature type="glycosylation site" description="N-linked (GlcNAc...) asparagine" evidence="4">
    <location>
        <position position="62"/>
    </location>
</feature>
<feature type="glycosylation site" description="N-linked (GlcNAc...) asparagine" evidence="4">
    <location>
        <position position="101"/>
    </location>
</feature>
<feature type="glycosylation site" description="N-linked (GlcNAc...) asparagine" evidence="3 4">
    <location>
        <position position="153"/>
    </location>
</feature>
<feature type="disulfide bond" evidence="3">
    <location>
        <begin position="82"/>
        <end position="335"/>
    </location>
</feature>
<feature type="disulfide bond" evidence="3">
    <location>
        <begin position="91"/>
        <end position="338"/>
    </location>
</feature>
<feature type="disulfide bond" evidence="3">
    <location>
        <begin position="190"/>
        <end position="238"/>
    </location>
</feature>
<proteinExistence type="evidence at transcript level"/>
<organism>
    <name type="scientific">Canis lupus familiaris</name>
    <name type="common">Dog</name>
    <name type="synonym">Canis familiaris</name>
    <dbReference type="NCBI Taxonomy" id="9615"/>
    <lineage>
        <taxon>Eukaryota</taxon>
        <taxon>Metazoa</taxon>
        <taxon>Chordata</taxon>
        <taxon>Craniata</taxon>
        <taxon>Vertebrata</taxon>
        <taxon>Euteleostomi</taxon>
        <taxon>Mammalia</taxon>
        <taxon>Eutheria</taxon>
        <taxon>Laurasiatheria</taxon>
        <taxon>Carnivora</taxon>
        <taxon>Caniformia</taxon>
        <taxon>Canidae</taxon>
        <taxon>Canis</taxon>
    </lineage>
</organism>
<keyword id="KW-1015">Disulfide bond</keyword>
<keyword id="KW-0325">Glycoprotein</keyword>
<keyword id="KW-0328">Glycosyltransferase</keyword>
<keyword id="KW-0333">Golgi apparatus</keyword>
<keyword id="KW-0443">Lipid metabolism</keyword>
<keyword id="KW-0472">Membrane</keyword>
<keyword id="KW-1185">Reference proteome</keyword>
<keyword id="KW-0735">Signal-anchor</keyword>
<keyword id="KW-0808">Transferase</keyword>
<keyword id="KW-0812">Transmembrane</keyword>
<keyword id="KW-1133">Transmembrane helix</keyword>
<accession>Q659L1</accession>
<sequence length="359" mass="42055">MTSASKGILRPFLIVCIILGCFMACLLIYIKPTNSWIFSPMESASSVLKMKNFFSTKTDYFNETTILIWVWPFGQTFDLTSCQAMFNIQGCHLTTDRSLYNKSHAVLIHHRDISWDLTNLPQQARPPFQKWIWMNLESPTHTPQKSGIEHLFNLTLTYRRDSDIQVPYGFLTVSTNPFVFEVPSKEKLVCWVVSNWNPEHARVKYYNELSKSIEIHTYGQAFGEYVNDKNLIPTISTCKFYLSFENSIHKDYITEKLYNAFLAGSVPVVLGPSRENYENYIPADSFIHVEDYNSPSELAKYLKEVDKNNKLYLSYFNWRKDFTVNLPRFWESHACLACDHVKRHQEYKSVGNLEKWFWN</sequence>
<evidence type="ECO:0000250" key="1">
    <source>
        <dbReference type="UniProtKB" id="O88819"/>
    </source>
</evidence>
<evidence type="ECO:0000250" key="2">
    <source>
        <dbReference type="UniProtKB" id="Q6P4F1"/>
    </source>
</evidence>
<evidence type="ECO:0000250" key="3">
    <source>
        <dbReference type="UniProtKB" id="Q9Y231"/>
    </source>
</evidence>
<evidence type="ECO:0000255" key="4"/>
<evidence type="ECO:0000303" key="5">
    <source ref="1"/>
</evidence>
<evidence type="ECO:0000305" key="6"/>
<dbReference type="EC" id="2.4.1.152" evidence="3"/>
<dbReference type="EMBL" id="AJ831838">
    <property type="protein sequence ID" value="CAH41981.1"/>
    <property type="molecule type" value="mRNA"/>
</dbReference>
<dbReference type="RefSeq" id="NP_001005380.1">
    <property type="nucleotide sequence ID" value="NM_001005380.1"/>
</dbReference>
<dbReference type="RefSeq" id="XP_005627091.1">
    <property type="nucleotide sequence ID" value="XM_005627034.1"/>
</dbReference>
<dbReference type="RefSeq" id="XP_005627092.1">
    <property type="nucleotide sequence ID" value="XM_005627035.1"/>
</dbReference>
<dbReference type="RefSeq" id="XP_005627094.1">
    <property type="nucleotide sequence ID" value="XM_005627037.1"/>
</dbReference>
<dbReference type="RefSeq" id="XP_005627096.1">
    <property type="nucleotide sequence ID" value="XM_005627039.1"/>
</dbReference>
<dbReference type="RefSeq" id="XP_013973502.1">
    <property type="nucleotide sequence ID" value="XM_014118027.1"/>
</dbReference>
<dbReference type="RefSeq" id="XP_013973503.1">
    <property type="nucleotide sequence ID" value="XM_014118028.1"/>
</dbReference>
<dbReference type="RefSeq" id="XP_038538633.1">
    <property type="nucleotide sequence ID" value="XM_038682705.1"/>
</dbReference>
<dbReference type="SMR" id="Q659L1"/>
<dbReference type="FunCoup" id="Q659L1">
    <property type="interactions" value="61"/>
</dbReference>
<dbReference type="STRING" id="9615.ENSCAFP00000005103"/>
<dbReference type="CAZy" id="GT10">
    <property type="family name" value="Glycosyltransferase Family 10"/>
</dbReference>
<dbReference type="GlyCosmos" id="Q659L1">
    <property type="glycosylation" value="3 sites, No reported glycans"/>
</dbReference>
<dbReference type="PaxDb" id="9612-ENSCAFP00000005103"/>
<dbReference type="Ensembl" id="ENSCAFT00000005507.4">
    <property type="protein sequence ID" value="ENSCAFP00000005103.3"/>
    <property type="gene ID" value="ENSCAFG00000003421.4"/>
</dbReference>
<dbReference type="Ensembl" id="ENSCAFT00030009125.1">
    <property type="protein sequence ID" value="ENSCAFP00030008007.1"/>
    <property type="gene ID" value="ENSCAFG00030004971.1"/>
</dbReference>
<dbReference type="Ensembl" id="ENSCAFT00040008492.1">
    <property type="protein sequence ID" value="ENSCAFP00040007373.1"/>
    <property type="gene ID" value="ENSCAFG00040004479.1"/>
</dbReference>
<dbReference type="Ensembl" id="ENSCAFT00845014928.1">
    <property type="protein sequence ID" value="ENSCAFP00845011571.1"/>
    <property type="gene ID" value="ENSCAFG00845008503.1"/>
</dbReference>
<dbReference type="GeneID" id="449027"/>
<dbReference type="KEGG" id="cfa:449027"/>
<dbReference type="CTD" id="10690"/>
<dbReference type="VEuPathDB" id="HostDB:ENSCAFG00845008503"/>
<dbReference type="VGNC" id="VGNC:41016">
    <property type="gene designation" value="FUT9"/>
</dbReference>
<dbReference type="eggNOG" id="KOG2619">
    <property type="taxonomic scope" value="Eukaryota"/>
</dbReference>
<dbReference type="GeneTree" id="ENSGT00940000155095"/>
<dbReference type="InParanoid" id="Q659L1"/>
<dbReference type="OrthoDB" id="427096at2759"/>
<dbReference type="Reactome" id="R-CFA-9037629">
    <property type="pathway name" value="Lewis blood group biosynthesis"/>
</dbReference>
<dbReference type="UniPathway" id="UPA00378"/>
<dbReference type="Proteomes" id="UP000002254">
    <property type="component" value="Chromosome 12"/>
</dbReference>
<dbReference type="Proteomes" id="UP000694429">
    <property type="component" value="Chromosome 12"/>
</dbReference>
<dbReference type="Proteomes" id="UP000694542">
    <property type="component" value="Chromosome 12"/>
</dbReference>
<dbReference type="Proteomes" id="UP000805418">
    <property type="component" value="Chromosome 12"/>
</dbReference>
<dbReference type="Bgee" id="ENSCAFG00000003421">
    <property type="expression patterns" value="Expressed in prefrontal cortex and 10 other cell types or tissues"/>
</dbReference>
<dbReference type="GO" id="GO:0005794">
    <property type="term" value="C:Golgi apparatus"/>
    <property type="evidence" value="ECO:0000250"/>
    <property type="project" value="UniProtKB"/>
</dbReference>
<dbReference type="GO" id="GO:0000139">
    <property type="term" value="C:Golgi membrane"/>
    <property type="evidence" value="ECO:0007669"/>
    <property type="project" value="UniProtKB-SubCell"/>
</dbReference>
<dbReference type="GO" id="GO:0005802">
    <property type="term" value="C:trans-Golgi network"/>
    <property type="evidence" value="ECO:0000250"/>
    <property type="project" value="UniProtKB"/>
</dbReference>
<dbReference type="GO" id="GO:0032588">
    <property type="term" value="C:trans-Golgi network membrane"/>
    <property type="evidence" value="ECO:0000250"/>
    <property type="project" value="UniProtKB"/>
</dbReference>
<dbReference type="GO" id="GO:0017083">
    <property type="term" value="F:4-galactosyl-N-acetylglucosaminide 3-alpha-L-fucosyltransferase activity"/>
    <property type="evidence" value="ECO:0000250"/>
    <property type="project" value="UniProtKB"/>
</dbReference>
<dbReference type="GO" id="GO:0046920">
    <property type="term" value="F:alpha-(1-&gt;3)-fucosyltransferase activity"/>
    <property type="evidence" value="ECO:0000250"/>
    <property type="project" value="AgBase"/>
</dbReference>
<dbReference type="GO" id="GO:0042803">
    <property type="term" value="F:protein homodimerization activity"/>
    <property type="evidence" value="ECO:0000250"/>
    <property type="project" value="UniProtKB"/>
</dbReference>
<dbReference type="GO" id="GO:0036065">
    <property type="term" value="P:fucosylation"/>
    <property type="evidence" value="ECO:0000250"/>
    <property type="project" value="UniProtKB"/>
</dbReference>
<dbReference type="GO" id="GO:0006688">
    <property type="term" value="P:glycosphingolipid biosynthetic process"/>
    <property type="evidence" value="ECO:0000250"/>
    <property type="project" value="UniProtKB"/>
</dbReference>
<dbReference type="GO" id="GO:0106402">
    <property type="term" value="P:Lewis x epitope biosynthetic process"/>
    <property type="evidence" value="ECO:0000250"/>
    <property type="project" value="UniProtKB"/>
</dbReference>
<dbReference type="GO" id="GO:0036071">
    <property type="term" value="P:N-glycan fucosylation"/>
    <property type="evidence" value="ECO:0007669"/>
    <property type="project" value="Ensembl"/>
</dbReference>
<dbReference type="GO" id="GO:0030182">
    <property type="term" value="P:neuron differentiation"/>
    <property type="evidence" value="ECO:0000250"/>
    <property type="project" value="UniProtKB"/>
</dbReference>
<dbReference type="GO" id="GO:0036445">
    <property type="term" value="P:neuronal stem cell division"/>
    <property type="evidence" value="ECO:0000250"/>
    <property type="project" value="UniProtKB"/>
</dbReference>
<dbReference type="GO" id="GO:0009312">
    <property type="term" value="P:oligosaccharide biosynthetic process"/>
    <property type="evidence" value="ECO:0007669"/>
    <property type="project" value="Ensembl"/>
</dbReference>
<dbReference type="GO" id="GO:0000271">
    <property type="term" value="P:polysaccharide biosynthetic process"/>
    <property type="evidence" value="ECO:0000250"/>
    <property type="project" value="UniProtKB"/>
</dbReference>
<dbReference type="GO" id="GO:0010976">
    <property type="term" value="P:positive regulation of neuron projection development"/>
    <property type="evidence" value="ECO:0000250"/>
    <property type="project" value="UniProtKB"/>
</dbReference>
<dbReference type="GO" id="GO:0006486">
    <property type="term" value="P:protein glycosylation"/>
    <property type="evidence" value="ECO:0000250"/>
    <property type="project" value="AgBase"/>
</dbReference>
<dbReference type="GO" id="GO:0006487">
    <property type="term" value="P:protein N-linked glycosylation"/>
    <property type="evidence" value="ECO:0000250"/>
    <property type="project" value="UniProtKB"/>
</dbReference>
<dbReference type="GO" id="GO:0006493">
    <property type="term" value="P:protein O-linked glycosylation"/>
    <property type="evidence" value="ECO:0000250"/>
    <property type="project" value="UniProtKB"/>
</dbReference>
<dbReference type="GO" id="GO:1903037">
    <property type="term" value="P:regulation of leukocyte cell-cell adhesion"/>
    <property type="evidence" value="ECO:0000250"/>
    <property type="project" value="UniProtKB"/>
</dbReference>
<dbReference type="GO" id="GO:1903236">
    <property type="term" value="P:regulation of leukocyte tethering or rolling"/>
    <property type="evidence" value="ECO:0000250"/>
    <property type="project" value="UniProtKB"/>
</dbReference>
<dbReference type="FunFam" id="3.40.50.11660:FF:000001">
    <property type="entry name" value="alpha-(1,3)-fucosyltransferase 9"/>
    <property type="match status" value="1"/>
</dbReference>
<dbReference type="Gene3D" id="3.40.50.11660">
    <property type="entry name" value="Glycosyl transferase family 10, C-terminal domain"/>
    <property type="match status" value="1"/>
</dbReference>
<dbReference type="InterPro" id="IPR055270">
    <property type="entry name" value="Glyco_tran_10_C"/>
</dbReference>
<dbReference type="InterPro" id="IPR031481">
    <property type="entry name" value="Glyco_tran_10_N"/>
</dbReference>
<dbReference type="InterPro" id="IPR001503">
    <property type="entry name" value="Glyco_trans_10"/>
</dbReference>
<dbReference type="InterPro" id="IPR038577">
    <property type="entry name" value="GT10-like_C_sf"/>
</dbReference>
<dbReference type="PANTHER" id="PTHR11929:SF10">
    <property type="entry name" value="4-GALACTOSYL-N-ACETYLGLUCOSAMINIDE 3-ALPHA-L-FUCOSYLTRANSFERASE 9"/>
    <property type="match status" value="1"/>
</dbReference>
<dbReference type="PANTHER" id="PTHR11929">
    <property type="entry name" value="ALPHA- 1,3 -FUCOSYLTRANSFERASE"/>
    <property type="match status" value="1"/>
</dbReference>
<dbReference type="Pfam" id="PF17039">
    <property type="entry name" value="Glyco_tran_10_N"/>
    <property type="match status" value="1"/>
</dbReference>
<dbReference type="Pfam" id="PF00852">
    <property type="entry name" value="Glyco_transf_10"/>
    <property type="match status" value="1"/>
</dbReference>
<dbReference type="SUPFAM" id="SSF53756">
    <property type="entry name" value="UDP-Glycosyltransferase/glycogen phosphorylase"/>
    <property type="match status" value="1"/>
</dbReference>
<protein>
    <recommendedName>
        <fullName evidence="3">4-galactosyl-N-acetylglucosaminide 3-alpha-L-fucosyltransferase 9</fullName>
        <ecNumber evidence="3">2.4.1.152</ecNumber>
    </recommendedName>
    <alternativeName>
        <fullName evidence="5">Fucosyltransferase 9</fullName>
    </alternativeName>
    <alternativeName>
        <fullName evidence="3">Fucosyltransferase IX</fullName>
        <shortName evidence="3">Fuc-TIX</shortName>
        <shortName>FucT-IX</shortName>
    </alternativeName>
    <alternativeName>
        <fullName>Galactoside 3-L-fucosyltransferase</fullName>
    </alternativeName>
</protein>